<accession>Q5LRI5</accession>
<evidence type="ECO:0000255" key="1">
    <source>
        <dbReference type="HAMAP-Rule" id="MF_01903"/>
    </source>
</evidence>
<protein>
    <recommendedName>
        <fullName evidence="1">Xanthine-guanine phosphoribosyltransferase</fullName>
        <shortName evidence="1">XGPRT</shortName>
        <ecNumber evidence="1">2.4.2.-</ecNumber>
        <ecNumber evidence="1">2.4.2.22</ecNumber>
    </recommendedName>
    <alternativeName>
        <fullName evidence="1">Xanthine phosphoribosyltransferase</fullName>
    </alternativeName>
</protein>
<proteinExistence type="inferred from homology"/>
<organism>
    <name type="scientific">Ruegeria pomeroyi (strain ATCC 700808 / DSM 15171 / DSS-3)</name>
    <name type="common">Silicibacter pomeroyi</name>
    <dbReference type="NCBI Taxonomy" id="246200"/>
    <lineage>
        <taxon>Bacteria</taxon>
        <taxon>Pseudomonadati</taxon>
        <taxon>Pseudomonadota</taxon>
        <taxon>Alphaproteobacteria</taxon>
        <taxon>Rhodobacterales</taxon>
        <taxon>Roseobacteraceae</taxon>
        <taxon>Ruegeria</taxon>
    </lineage>
</organism>
<comment type="function">
    <text evidence="1">Purine salvage pathway enzyme that catalyzes the transfer of the ribosyl-5-phosphate group from 5-phospho-alpha-D-ribose 1-diphosphate (PRPP) to the N9 position of the 6-oxopurines guanine and xanthine to form the corresponding ribonucleotides GMP (guanosine 5'-monophosphate) and XMP (xanthosine 5'-monophosphate), with the release of PPi. To a lesser extent, also acts on hypoxanthine.</text>
</comment>
<comment type="catalytic activity">
    <reaction evidence="1">
        <text>GMP + diphosphate = guanine + 5-phospho-alpha-D-ribose 1-diphosphate</text>
        <dbReference type="Rhea" id="RHEA:25424"/>
        <dbReference type="ChEBI" id="CHEBI:16235"/>
        <dbReference type="ChEBI" id="CHEBI:33019"/>
        <dbReference type="ChEBI" id="CHEBI:58017"/>
        <dbReference type="ChEBI" id="CHEBI:58115"/>
    </reaction>
    <physiologicalReaction direction="right-to-left" evidence="1">
        <dbReference type="Rhea" id="RHEA:25426"/>
    </physiologicalReaction>
</comment>
<comment type="catalytic activity">
    <reaction evidence="1">
        <text>XMP + diphosphate = xanthine + 5-phospho-alpha-D-ribose 1-diphosphate</text>
        <dbReference type="Rhea" id="RHEA:10800"/>
        <dbReference type="ChEBI" id="CHEBI:17712"/>
        <dbReference type="ChEBI" id="CHEBI:33019"/>
        <dbReference type="ChEBI" id="CHEBI:57464"/>
        <dbReference type="ChEBI" id="CHEBI:58017"/>
        <dbReference type="EC" id="2.4.2.22"/>
    </reaction>
    <physiologicalReaction direction="right-to-left" evidence="1">
        <dbReference type="Rhea" id="RHEA:10802"/>
    </physiologicalReaction>
</comment>
<comment type="catalytic activity">
    <reaction evidence="1">
        <text>IMP + diphosphate = hypoxanthine + 5-phospho-alpha-D-ribose 1-diphosphate</text>
        <dbReference type="Rhea" id="RHEA:17973"/>
        <dbReference type="ChEBI" id="CHEBI:17368"/>
        <dbReference type="ChEBI" id="CHEBI:33019"/>
        <dbReference type="ChEBI" id="CHEBI:58017"/>
        <dbReference type="ChEBI" id="CHEBI:58053"/>
    </reaction>
    <physiologicalReaction direction="right-to-left" evidence="1">
        <dbReference type="Rhea" id="RHEA:17975"/>
    </physiologicalReaction>
</comment>
<comment type="cofactor">
    <cofactor evidence="1">
        <name>Mg(2+)</name>
        <dbReference type="ChEBI" id="CHEBI:18420"/>
    </cofactor>
</comment>
<comment type="pathway">
    <text evidence="1">Purine metabolism; GMP biosynthesis via salvage pathway; GMP from guanine: step 1/1.</text>
</comment>
<comment type="pathway">
    <text evidence="1">Purine metabolism; XMP biosynthesis via salvage pathway; XMP from xanthine: step 1/1.</text>
</comment>
<comment type="subunit">
    <text evidence="1">Homotetramer.</text>
</comment>
<comment type="subcellular location">
    <subcellularLocation>
        <location evidence="1">Cell inner membrane</location>
        <topology evidence="1">Peripheral membrane protein</topology>
    </subcellularLocation>
</comment>
<comment type="similarity">
    <text evidence="1">Belongs to the purine/pyrimidine phosphoribosyltransferase family. XGPT subfamily.</text>
</comment>
<feature type="chain" id="PRO_0000139689" description="Xanthine-guanine phosphoribosyltransferase">
    <location>
        <begin position="1"/>
        <end position="171"/>
    </location>
</feature>
<feature type="binding site" evidence="1">
    <location>
        <begin position="51"/>
        <end position="52"/>
    </location>
    <ligand>
        <name>5-phospho-alpha-D-ribose 1-diphosphate</name>
        <dbReference type="ChEBI" id="CHEBI:58017"/>
    </ligand>
</feature>
<feature type="binding site" evidence="1">
    <location>
        <begin position="106"/>
        <end position="114"/>
    </location>
    <ligand>
        <name>5-phospho-alpha-D-ribose 1-diphosphate</name>
        <dbReference type="ChEBI" id="CHEBI:58017"/>
    </ligand>
</feature>
<feature type="binding site" evidence="1">
    <location>
        <position position="107"/>
    </location>
    <ligand>
        <name>Mg(2+)</name>
        <dbReference type="ChEBI" id="CHEBI:18420"/>
    </ligand>
</feature>
<feature type="binding site" evidence="1">
    <location>
        <begin position="110"/>
        <end position="114"/>
    </location>
    <ligand>
        <name>GMP</name>
        <dbReference type="ChEBI" id="CHEBI:58115"/>
    </ligand>
</feature>
<feature type="binding site" evidence="1">
    <location>
        <position position="110"/>
    </location>
    <ligand>
        <name>guanine</name>
        <dbReference type="ChEBI" id="CHEBI:16235"/>
    </ligand>
</feature>
<feature type="binding site" evidence="1">
    <location>
        <position position="110"/>
    </location>
    <ligand>
        <name>xanthine</name>
        <dbReference type="ChEBI" id="CHEBI:17712"/>
    </ligand>
</feature>
<feature type="binding site" evidence="1">
    <location>
        <begin position="152"/>
        <end position="153"/>
    </location>
    <ligand>
        <name>GMP</name>
        <dbReference type="ChEBI" id="CHEBI:58115"/>
    </ligand>
</feature>
<feature type="binding site" evidence="1">
    <location>
        <position position="153"/>
    </location>
    <ligand>
        <name>guanine</name>
        <dbReference type="ChEBI" id="CHEBI:16235"/>
    </ligand>
</feature>
<feature type="binding site" evidence="1">
    <location>
        <position position="153"/>
    </location>
    <ligand>
        <name>xanthine</name>
        <dbReference type="ChEBI" id="CHEBI:17712"/>
    </ligand>
</feature>
<dbReference type="EC" id="2.4.2.-" evidence="1"/>
<dbReference type="EC" id="2.4.2.22" evidence="1"/>
<dbReference type="EMBL" id="CP000031">
    <property type="protein sequence ID" value="AAV95411.1"/>
    <property type="molecule type" value="Genomic_DNA"/>
</dbReference>
<dbReference type="RefSeq" id="WP_011047866.1">
    <property type="nucleotide sequence ID" value="NC_003911.12"/>
</dbReference>
<dbReference type="SMR" id="Q5LRI5"/>
<dbReference type="STRING" id="246200.SPO2143"/>
<dbReference type="PaxDb" id="246200-SPO2143"/>
<dbReference type="KEGG" id="sil:SPO2143"/>
<dbReference type="eggNOG" id="COG2236">
    <property type="taxonomic scope" value="Bacteria"/>
</dbReference>
<dbReference type="HOGENOM" id="CLU_080904_3_0_5"/>
<dbReference type="OrthoDB" id="9789690at2"/>
<dbReference type="UniPathway" id="UPA00602">
    <property type="reaction ID" value="UER00658"/>
</dbReference>
<dbReference type="UniPathway" id="UPA00909">
    <property type="reaction ID" value="UER00887"/>
</dbReference>
<dbReference type="Proteomes" id="UP000001023">
    <property type="component" value="Chromosome"/>
</dbReference>
<dbReference type="GO" id="GO:0005886">
    <property type="term" value="C:plasma membrane"/>
    <property type="evidence" value="ECO:0007669"/>
    <property type="project" value="UniProtKB-SubCell"/>
</dbReference>
<dbReference type="GO" id="GO:0052657">
    <property type="term" value="F:guanine phosphoribosyltransferase activity"/>
    <property type="evidence" value="ECO:0007669"/>
    <property type="project" value="RHEA"/>
</dbReference>
<dbReference type="GO" id="GO:0004422">
    <property type="term" value="F:hypoxanthine phosphoribosyltransferase activity"/>
    <property type="evidence" value="ECO:0007669"/>
    <property type="project" value="RHEA"/>
</dbReference>
<dbReference type="GO" id="GO:0000287">
    <property type="term" value="F:magnesium ion binding"/>
    <property type="evidence" value="ECO:0007669"/>
    <property type="project" value="UniProtKB-UniRule"/>
</dbReference>
<dbReference type="GO" id="GO:0000310">
    <property type="term" value="F:xanthine phosphoribosyltransferase activity"/>
    <property type="evidence" value="ECO:0007669"/>
    <property type="project" value="UniProtKB-UniRule"/>
</dbReference>
<dbReference type="GO" id="GO:0032263">
    <property type="term" value="P:GMP salvage"/>
    <property type="evidence" value="ECO:0007669"/>
    <property type="project" value="UniProtKB-UniRule"/>
</dbReference>
<dbReference type="GO" id="GO:0006166">
    <property type="term" value="P:purine ribonucleoside salvage"/>
    <property type="evidence" value="ECO:0007669"/>
    <property type="project" value="UniProtKB-KW"/>
</dbReference>
<dbReference type="GO" id="GO:0032265">
    <property type="term" value="P:XMP salvage"/>
    <property type="evidence" value="ECO:0007669"/>
    <property type="project" value="UniProtKB-UniRule"/>
</dbReference>
<dbReference type="CDD" id="cd06223">
    <property type="entry name" value="PRTases_typeI"/>
    <property type="match status" value="1"/>
</dbReference>
<dbReference type="Gene3D" id="3.40.50.2020">
    <property type="match status" value="1"/>
</dbReference>
<dbReference type="HAMAP" id="MF_01903">
    <property type="entry name" value="XGPRT"/>
    <property type="match status" value="1"/>
</dbReference>
<dbReference type="InterPro" id="IPR000836">
    <property type="entry name" value="PRibTrfase_dom"/>
</dbReference>
<dbReference type="InterPro" id="IPR029057">
    <property type="entry name" value="PRTase-like"/>
</dbReference>
<dbReference type="InterPro" id="IPR023747">
    <property type="entry name" value="Xanthine_Guanine_PRibTrfase"/>
</dbReference>
<dbReference type="NCBIfam" id="NF006613">
    <property type="entry name" value="PRK09177.1"/>
    <property type="match status" value="1"/>
</dbReference>
<dbReference type="PANTHER" id="PTHR39563">
    <property type="entry name" value="XANTHINE PHOSPHORIBOSYLTRANSFERASE"/>
    <property type="match status" value="1"/>
</dbReference>
<dbReference type="PANTHER" id="PTHR39563:SF1">
    <property type="entry name" value="XANTHINE-GUANINE PHOSPHORIBOSYLTRANSFERASE"/>
    <property type="match status" value="1"/>
</dbReference>
<dbReference type="Pfam" id="PF00156">
    <property type="entry name" value="Pribosyltran"/>
    <property type="match status" value="1"/>
</dbReference>
<dbReference type="SUPFAM" id="SSF53271">
    <property type="entry name" value="PRTase-like"/>
    <property type="match status" value="1"/>
</dbReference>
<dbReference type="PROSITE" id="PS00103">
    <property type="entry name" value="PUR_PYR_PR_TRANSFER"/>
    <property type="match status" value="1"/>
</dbReference>
<sequence>MSTKDPHRLPHEKGFHISWDQIHRDSRALAWRLDGQGPDEGAWRAVVAITRGGMAPAMIVSRELDIRTVDTISVKSYHHQAQGQAQVLKAPDAGLMGDGTGILVIDDLVDSGKTLELVREMYPNAHFATVYAKPKGRPMVDTFITEVSQDTWIFFPWDMALQYVEPYRGTD</sequence>
<gene>
    <name evidence="1" type="primary">gpt</name>
    <name type="ordered locus">SPO2143</name>
</gene>
<keyword id="KW-0997">Cell inner membrane</keyword>
<keyword id="KW-1003">Cell membrane</keyword>
<keyword id="KW-0328">Glycosyltransferase</keyword>
<keyword id="KW-0460">Magnesium</keyword>
<keyword id="KW-0472">Membrane</keyword>
<keyword id="KW-0479">Metal-binding</keyword>
<keyword id="KW-0660">Purine salvage</keyword>
<keyword id="KW-1185">Reference proteome</keyword>
<keyword id="KW-0808">Transferase</keyword>
<reference key="1">
    <citation type="journal article" date="2004" name="Nature">
        <title>Genome sequence of Silicibacter pomeroyi reveals adaptations to the marine environment.</title>
        <authorList>
            <person name="Moran M.A."/>
            <person name="Buchan A."/>
            <person name="Gonzalez J.M."/>
            <person name="Heidelberg J.F."/>
            <person name="Whitman W.B."/>
            <person name="Kiene R.P."/>
            <person name="Henriksen J.R."/>
            <person name="King G.M."/>
            <person name="Belas R."/>
            <person name="Fuqua C."/>
            <person name="Brinkac L.M."/>
            <person name="Lewis M."/>
            <person name="Johri S."/>
            <person name="Weaver B."/>
            <person name="Pai G."/>
            <person name="Eisen J.A."/>
            <person name="Rahe E."/>
            <person name="Sheldon W.M."/>
            <person name="Ye W."/>
            <person name="Miller T.R."/>
            <person name="Carlton J."/>
            <person name="Rasko D.A."/>
            <person name="Paulsen I.T."/>
            <person name="Ren Q."/>
            <person name="Daugherty S.C."/>
            <person name="DeBoy R.T."/>
            <person name="Dodson R.J."/>
            <person name="Durkin A.S."/>
            <person name="Madupu R."/>
            <person name="Nelson W.C."/>
            <person name="Sullivan S.A."/>
            <person name="Rosovitz M.J."/>
            <person name="Haft D.H."/>
            <person name="Selengut J."/>
            <person name="Ward N."/>
        </authorList>
    </citation>
    <scope>NUCLEOTIDE SEQUENCE [LARGE SCALE GENOMIC DNA]</scope>
    <source>
        <strain>ATCC 700808 / DSM 15171 / DSS-3</strain>
    </source>
</reference>
<reference key="2">
    <citation type="journal article" date="2014" name="Stand. Genomic Sci.">
        <title>An updated genome annotation for the model marine bacterium Ruegeria pomeroyi DSS-3.</title>
        <authorList>
            <person name="Rivers A.R."/>
            <person name="Smith C.B."/>
            <person name="Moran M.A."/>
        </authorList>
    </citation>
    <scope>GENOME REANNOTATION</scope>
    <source>
        <strain>ATCC 700808 / DSM 15171 / DSS-3</strain>
    </source>
</reference>
<name>XGPT_RUEPO</name>